<name>CLPT3_CHLRE</name>
<proteinExistence type="evidence at protein level"/>
<sequence length="303" mass="31426">MLLANAPHNGCSRLQQVTLLRASGAKLHRKRALTVVARTGTPQPRLPLSTQTSASLRAAREQAVLQSLLFAGPDQLLLGVLAGSRLGNGKGAAAVLEAELGGGDCDSVREWLNEQSGSTAAKLQGSGWLRPSDVEFSPAARRVLSLAEAGAEAMGSSSVGTYHLLLVLMGAGGEQQAVQAGAEVASTEQVDGSGMAANSRGSTSGSEQPPRDSDLGLLRSLLDVAGVDRTALEVKLLALAEAGAEMPPAQDSQATAAGVVATLTSVYRQQVARAWHERDDNAFRQAHQNTAMATGPDPDDEYE</sequence>
<comment type="function">
    <text evidence="1">Accessory protein regulating the assembly of the plastid Clp protease system.</text>
</comment>
<comment type="subcellular location">
    <subcellularLocation>
        <location evidence="1">Plastid</location>
        <location evidence="1">Chloroplast</location>
    </subcellularLocation>
</comment>
<comment type="similarity">
    <text evidence="5">Belongs to the ClpA/ClpB family.</text>
</comment>
<dbReference type="EMBL" id="DS496115">
    <property type="protein sequence ID" value="EDP06586.1"/>
    <property type="molecule type" value="Genomic_DNA"/>
</dbReference>
<dbReference type="EMBL" id="CM008971">
    <property type="protein sequence ID" value="PNW76981.1"/>
    <property type="molecule type" value="Genomic_DNA"/>
</dbReference>
<dbReference type="RefSeq" id="XP_001702807.1">
    <property type="nucleotide sequence ID" value="XM_001702755.1"/>
</dbReference>
<dbReference type="SMR" id="A8ID95"/>
<dbReference type="PaxDb" id="3055-EDP06586"/>
<dbReference type="EnsemblPlants" id="PNW76981">
    <property type="protein sequence ID" value="PNW76981"/>
    <property type="gene ID" value="CHLRE_10g417550v5"/>
</dbReference>
<dbReference type="GeneID" id="5728345"/>
<dbReference type="Gramene" id="PNW76981">
    <property type="protein sequence ID" value="PNW76981"/>
    <property type="gene ID" value="CHLRE_10g417550v5"/>
</dbReference>
<dbReference type="KEGG" id="cre:CHLRE_10g417550v5"/>
<dbReference type="HOGENOM" id="CLU_919373_0_0_1"/>
<dbReference type="InParanoid" id="A8ID95"/>
<dbReference type="OMA" id="RCHATKP"/>
<dbReference type="OrthoDB" id="551802at2759"/>
<dbReference type="Proteomes" id="UP000006906">
    <property type="component" value="Chromosome 10"/>
</dbReference>
<dbReference type="GO" id="GO:0009507">
    <property type="term" value="C:chloroplast"/>
    <property type="evidence" value="ECO:0007669"/>
    <property type="project" value="UniProtKB-SubCell"/>
</dbReference>
<dbReference type="Gene3D" id="1.10.1780.10">
    <property type="entry name" value="Clp, N-terminal domain"/>
    <property type="match status" value="1"/>
</dbReference>
<dbReference type="InterPro" id="IPR036628">
    <property type="entry name" value="Clp_N_dom_sf"/>
</dbReference>
<dbReference type="SUPFAM" id="SSF81923">
    <property type="entry name" value="Double Clp-N motif"/>
    <property type="match status" value="1"/>
</dbReference>
<feature type="transit peptide" description="Chloroplast" evidence="2">
    <location>
        <begin position="1"/>
        <end position="37"/>
    </location>
</feature>
<feature type="chain" id="PRO_0000450658" description="ATP-dependent Clp protease ATP-binding subunit CLPT3, chloroplastic">
    <location>
        <begin position="38"/>
        <end position="303"/>
    </location>
</feature>
<feature type="region of interest" description="Disordered" evidence="3">
    <location>
        <begin position="185"/>
        <end position="214"/>
    </location>
</feature>
<feature type="region of interest" description="Disordered" evidence="3">
    <location>
        <begin position="278"/>
        <end position="303"/>
    </location>
</feature>
<gene>
    <name evidence="4" type="primary">CLPT3</name>
    <name evidence="7" type="ORF">CHLRE_10g417550v5</name>
    <name evidence="6" type="ORF">CHLREDRAFT_195805</name>
</gene>
<protein>
    <recommendedName>
        <fullName evidence="5">ATP-dependent Clp protease ATP-binding subunit CLPT3, chloroplastic</fullName>
    </recommendedName>
</protein>
<evidence type="ECO:0000250" key="1">
    <source>
        <dbReference type="UniProtKB" id="Q93WL3"/>
    </source>
</evidence>
<evidence type="ECO:0000255" key="2"/>
<evidence type="ECO:0000256" key="3">
    <source>
        <dbReference type="SAM" id="MobiDB-lite"/>
    </source>
</evidence>
<evidence type="ECO:0000303" key="4">
    <source>
    </source>
</evidence>
<evidence type="ECO:0000305" key="5"/>
<evidence type="ECO:0000312" key="6">
    <source>
        <dbReference type="EMBL" id="EDP06586.1"/>
    </source>
</evidence>
<evidence type="ECO:0000312" key="7">
    <source>
        <dbReference type="EMBL" id="PNW76981.1"/>
    </source>
</evidence>
<keyword id="KW-0150">Chloroplast</keyword>
<keyword id="KW-0934">Plastid</keyword>
<keyword id="KW-1185">Reference proteome</keyword>
<keyword id="KW-0809">Transit peptide</keyword>
<accession>A8ID95</accession>
<reference key="1">
    <citation type="journal article" date="2007" name="Science">
        <title>The Chlamydomonas genome reveals the evolution of key animal and plant functions.</title>
        <authorList>
            <person name="Merchant S.S."/>
            <person name="Prochnik S.E."/>
            <person name="Vallon O."/>
            <person name="Harris E.H."/>
            <person name="Karpowicz S.J."/>
            <person name="Witman G.B."/>
            <person name="Terry A."/>
            <person name="Salamov A."/>
            <person name="Fritz-Laylin L.K."/>
            <person name="Marechal-Drouard L."/>
            <person name="Marshall W.F."/>
            <person name="Qu L.H."/>
            <person name="Nelson D.R."/>
            <person name="Sanderfoot A.A."/>
            <person name="Spalding M.H."/>
            <person name="Kapitonov V.V."/>
            <person name="Ren Q."/>
            <person name="Ferris P."/>
            <person name="Lindquist E."/>
            <person name="Shapiro H."/>
            <person name="Lucas S.M."/>
            <person name="Grimwood J."/>
            <person name="Schmutz J."/>
            <person name="Cardol P."/>
            <person name="Cerutti H."/>
            <person name="Chanfreau G."/>
            <person name="Chen C.L."/>
            <person name="Cognat V."/>
            <person name="Croft M.T."/>
            <person name="Dent R."/>
            <person name="Dutcher S."/>
            <person name="Fernandez E."/>
            <person name="Fukuzawa H."/>
            <person name="Gonzalez-Ballester D."/>
            <person name="Gonzalez-Halphen D."/>
            <person name="Hallmann A."/>
            <person name="Hanikenne M."/>
            <person name="Hippler M."/>
            <person name="Inwood W."/>
            <person name="Jabbari K."/>
            <person name="Kalanon M."/>
            <person name="Kuras R."/>
            <person name="Lefebvre P.A."/>
            <person name="Lemaire S.D."/>
            <person name="Lobanov A.V."/>
            <person name="Lohr M."/>
            <person name="Manuell A."/>
            <person name="Meier I."/>
            <person name="Mets L."/>
            <person name="Mittag M."/>
            <person name="Mittelmeier T."/>
            <person name="Moroney J.V."/>
            <person name="Moseley J."/>
            <person name="Napoli C."/>
            <person name="Nedelcu A.M."/>
            <person name="Niyogi K."/>
            <person name="Novoselov S.V."/>
            <person name="Paulsen I.T."/>
            <person name="Pazour G.J."/>
            <person name="Purton S."/>
            <person name="Ral J.P."/>
            <person name="Riano-Pachon D.M."/>
            <person name="Riekhof W."/>
            <person name="Rymarquis L."/>
            <person name="Schroda M."/>
            <person name="Stern D."/>
            <person name="Umen J."/>
            <person name="Willows R."/>
            <person name="Wilson N."/>
            <person name="Zimmer S.L."/>
            <person name="Allmer J."/>
            <person name="Balk J."/>
            <person name="Bisova K."/>
            <person name="Chen C.J."/>
            <person name="Elias M."/>
            <person name="Gendler K."/>
            <person name="Hauser C."/>
            <person name="Lamb M.R."/>
            <person name="Ledford H."/>
            <person name="Long J.C."/>
            <person name="Minagawa J."/>
            <person name="Page M.D."/>
            <person name="Pan J."/>
            <person name="Pootakham W."/>
            <person name="Roje S."/>
            <person name="Rose A."/>
            <person name="Stahlberg E."/>
            <person name="Terauchi A.M."/>
            <person name="Yang P."/>
            <person name="Ball S."/>
            <person name="Bowler C."/>
            <person name="Dieckmann C.L."/>
            <person name="Gladyshev V.N."/>
            <person name="Green P."/>
            <person name="Jorgensen R."/>
            <person name="Mayfield S."/>
            <person name="Mueller-Roeber B."/>
            <person name="Rajamani S."/>
            <person name="Sayre R.T."/>
            <person name="Brokstein P."/>
            <person name="Dubchak I."/>
            <person name="Goodstein D."/>
            <person name="Hornick L."/>
            <person name="Huang Y.W."/>
            <person name="Jhaveri J."/>
            <person name="Luo Y."/>
            <person name="Martinez D."/>
            <person name="Ngau W.C."/>
            <person name="Otillar B."/>
            <person name="Poliakov A."/>
            <person name="Porter A."/>
            <person name="Szajkowski L."/>
            <person name="Werner G."/>
            <person name="Zhou K."/>
            <person name="Grigoriev I.V."/>
            <person name="Rokhsar D.S."/>
            <person name="Grossman A.R."/>
        </authorList>
    </citation>
    <scope>NUCLEOTIDE SEQUENCE [LARGE SCALE GENOMIC DNA]</scope>
    <source>
        <strain>CC-503</strain>
    </source>
</reference>
<reference key="2">
    <citation type="submission" date="2017-07" db="EMBL/GenBank/DDBJ databases">
        <title>WGS assembly of Chlamydomonas reinhardtii.</title>
        <authorList>
            <consortium name="Chlamydomonas Annotation Team"/>
            <consortium name="JGI Annotation Team"/>
            <person name="Merchant S.S."/>
            <person name="Prochnik S.E."/>
            <person name="Vallon O."/>
            <person name="Harris E.H."/>
            <person name="Karpowicz S.J."/>
            <person name="Witman G.B."/>
            <person name="Terry A."/>
            <person name="Salamov A."/>
            <person name="Fritz-Laylin L.K."/>
            <person name="Marechal-Drouard L."/>
            <person name="Marshall W.F."/>
            <person name="Qu L.H."/>
            <person name="Nelson D.R."/>
            <person name="Sanderfoot A.A."/>
            <person name="Spalding M.H."/>
            <person name="Kapitonov V.V."/>
            <person name="Ren Q."/>
            <person name="Ferris P."/>
            <person name="Lindquist E."/>
            <person name="Shapiro H."/>
            <person name="Lucas S.M."/>
            <person name="Grimwood J."/>
            <person name="Schmutz J."/>
            <person name="Grigoriev I.V."/>
            <person name="Rokhsar D.S."/>
        </authorList>
    </citation>
    <scope>GENOME REANNOTATION</scope>
    <source>
        <strain>CC-503</strain>
    </source>
</reference>
<reference key="3">
    <citation type="journal article" date="2012" name="Plant Mol. Biol.">
        <title>The purification of the Chlamydomonas reinhardtii chloroplast ClpP complex: additional subunits and structural features.</title>
        <authorList>
            <person name="Derrien B."/>
            <person name="Majeran W."/>
            <person name="Effantin G."/>
            <person name="Ebenezer J."/>
            <person name="Friso G."/>
            <person name="van Wijk K.J."/>
            <person name="Steven A.C."/>
            <person name="Maurizi M.R."/>
            <person name="Vallon O."/>
        </authorList>
    </citation>
    <scope>IDENTIFICATION BY MASS SPECTROMETRY</scope>
</reference>
<organism>
    <name type="scientific">Chlamydomonas reinhardtii</name>
    <name type="common">Chlamydomonas smithii</name>
    <dbReference type="NCBI Taxonomy" id="3055"/>
    <lineage>
        <taxon>Eukaryota</taxon>
        <taxon>Viridiplantae</taxon>
        <taxon>Chlorophyta</taxon>
        <taxon>core chlorophytes</taxon>
        <taxon>Chlorophyceae</taxon>
        <taxon>CS clade</taxon>
        <taxon>Chlamydomonadales</taxon>
        <taxon>Chlamydomonadaceae</taxon>
        <taxon>Chlamydomonas</taxon>
    </lineage>
</organism>